<reference key="1">
    <citation type="journal article" date="2004" name="Mol. Plant Microbe Interact.">
        <title>The genome sequence of the Gram-positive sugarcane pathogen Leifsonia xyli subsp. xyli.</title>
        <authorList>
            <person name="Monteiro-Vitorello C.B."/>
            <person name="Camargo L.E.A."/>
            <person name="Van Sluys M.A."/>
            <person name="Kitajima J.P."/>
            <person name="Truffi D."/>
            <person name="do Amaral A.M."/>
            <person name="Harakava R."/>
            <person name="de Oliveira J.C.F."/>
            <person name="Wood D."/>
            <person name="de Oliveira M.C."/>
            <person name="Miyaki C.Y."/>
            <person name="Takita M.A."/>
            <person name="da Silva A.C.R."/>
            <person name="Furlan L.R."/>
            <person name="Carraro D.M."/>
            <person name="Camarotte G."/>
            <person name="Almeida N.F. Jr."/>
            <person name="Carrer H."/>
            <person name="Coutinho L.L."/>
            <person name="El-Dorry H.A."/>
            <person name="Ferro M.I.T."/>
            <person name="Gagliardi P.R."/>
            <person name="Giglioti E."/>
            <person name="Goldman M.H.S."/>
            <person name="Goldman G.H."/>
            <person name="Kimura E.T."/>
            <person name="Ferro E.S."/>
            <person name="Kuramae E.E."/>
            <person name="Lemos E.G.M."/>
            <person name="Lemos M.V.F."/>
            <person name="Mauro S.M.Z."/>
            <person name="Machado M.A."/>
            <person name="Marino C.L."/>
            <person name="Menck C.F."/>
            <person name="Nunes L.R."/>
            <person name="Oliveira R.C."/>
            <person name="Pereira G.G."/>
            <person name="Siqueira W."/>
            <person name="de Souza A.A."/>
            <person name="Tsai S.M."/>
            <person name="Zanca A.S."/>
            <person name="Simpson A.J.G."/>
            <person name="Brumbley S.M."/>
            <person name="Setubal J.C."/>
        </authorList>
    </citation>
    <scope>NUCLEOTIDE SEQUENCE [LARGE SCALE GENOMIC DNA]</scope>
    <source>
        <strain>CTCB07</strain>
    </source>
</reference>
<proteinExistence type="inferred from homology"/>
<dbReference type="EC" id="4.3.2.1" evidence="1"/>
<dbReference type="EMBL" id="AE016822">
    <property type="protein sequence ID" value="AAT88567.1"/>
    <property type="molecule type" value="Genomic_DNA"/>
</dbReference>
<dbReference type="SMR" id="Q6AGC8"/>
<dbReference type="STRING" id="281090.Lxx06080"/>
<dbReference type="KEGG" id="lxx:Lxx06080"/>
<dbReference type="eggNOG" id="COG0165">
    <property type="taxonomic scope" value="Bacteria"/>
</dbReference>
<dbReference type="HOGENOM" id="CLU_027272_2_2_11"/>
<dbReference type="UniPathway" id="UPA00068">
    <property type="reaction ID" value="UER00114"/>
</dbReference>
<dbReference type="Proteomes" id="UP000001306">
    <property type="component" value="Chromosome"/>
</dbReference>
<dbReference type="GO" id="GO:0005829">
    <property type="term" value="C:cytosol"/>
    <property type="evidence" value="ECO:0007669"/>
    <property type="project" value="TreeGrafter"/>
</dbReference>
<dbReference type="GO" id="GO:0004056">
    <property type="term" value="F:argininosuccinate lyase activity"/>
    <property type="evidence" value="ECO:0007669"/>
    <property type="project" value="UniProtKB-UniRule"/>
</dbReference>
<dbReference type="GO" id="GO:0042450">
    <property type="term" value="P:arginine biosynthetic process via ornithine"/>
    <property type="evidence" value="ECO:0007669"/>
    <property type="project" value="InterPro"/>
</dbReference>
<dbReference type="GO" id="GO:0006526">
    <property type="term" value="P:L-arginine biosynthetic process"/>
    <property type="evidence" value="ECO:0007669"/>
    <property type="project" value="UniProtKB-UniRule"/>
</dbReference>
<dbReference type="CDD" id="cd01359">
    <property type="entry name" value="Argininosuccinate_lyase"/>
    <property type="match status" value="1"/>
</dbReference>
<dbReference type="FunFam" id="1.10.40.30:FF:000001">
    <property type="entry name" value="Argininosuccinate lyase"/>
    <property type="match status" value="1"/>
</dbReference>
<dbReference type="FunFam" id="1.20.200.10:FF:000002">
    <property type="entry name" value="Argininosuccinate lyase"/>
    <property type="match status" value="1"/>
</dbReference>
<dbReference type="Gene3D" id="1.10.40.30">
    <property type="entry name" value="Fumarase/aspartase (C-terminal domain)"/>
    <property type="match status" value="1"/>
</dbReference>
<dbReference type="Gene3D" id="1.20.200.10">
    <property type="entry name" value="Fumarase/aspartase (Central domain)"/>
    <property type="match status" value="1"/>
</dbReference>
<dbReference type="Gene3D" id="1.10.275.10">
    <property type="entry name" value="Fumarase/aspartase (N-terminal domain)"/>
    <property type="match status" value="1"/>
</dbReference>
<dbReference type="HAMAP" id="MF_00006">
    <property type="entry name" value="Arg_succ_lyase"/>
    <property type="match status" value="1"/>
</dbReference>
<dbReference type="InterPro" id="IPR029419">
    <property type="entry name" value="Arg_succ_lyase_C"/>
</dbReference>
<dbReference type="InterPro" id="IPR009049">
    <property type="entry name" value="Argininosuccinate_lyase"/>
</dbReference>
<dbReference type="InterPro" id="IPR024083">
    <property type="entry name" value="Fumarase/histidase_N"/>
</dbReference>
<dbReference type="InterPro" id="IPR020557">
    <property type="entry name" value="Fumarate_lyase_CS"/>
</dbReference>
<dbReference type="InterPro" id="IPR000362">
    <property type="entry name" value="Fumarate_lyase_fam"/>
</dbReference>
<dbReference type="InterPro" id="IPR022761">
    <property type="entry name" value="Fumarate_lyase_N"/>
</dbReference>
<dbReference type="InterPro" id="IPR008948">
    <property type="entry name" value="L-Aspartase-like"/>
</dbReference>
<dbReference type="NCBIfam" id="TIGR00838">
    <property type="entry name" value="argH"/>
    <property type="match status" value="1"/>
</dbReference>
<dbReference type="PANTHER" id="PTHR43814">
    <property type="entry name" value="ARGININOSUCCINATE LYASE"/>
    <property type="match status" value="1"/>
</dbReference>
<dbReference type="PANTHER" id="PTHR43814:SF1">
    <property type="entry name" value="ARGININOSUCCINATE LYASE"/>
    <property type="match status" value="1"/>
</dbReference>
<dbReference type="Pfam" id="PF14698">
    <property type="entry name" value="ASL_C2"/>
    <property type="match status" value="1"/>
</dbReference>
<dbReference type="Pfam" id="PF00206">
    <property type="entry name" value="Lyase_1"/>
    <property type="match status" value="1"/>
</dbReference>
<dbReference type="PRINTS" id="PR00145">
    <property type="entry name" value="ARGSUCLYASE"/>
</dbReference>
<dbReference type="PRINTS" id="PR00149">
    <property type="entry name" value="FUMRATELYASE"/>
</dbReference>
<dbReference type="SUPFAM" id="SSF48557">
    <property type="entry name" value="L-aspartase-like"/>
    <property type="match status" value="1"/>
</dbReference>
<dbReference type="PROSITE" id="PS00163">
    <property type="entry name" value="FUMARATE_LYASES"/>
    <property type="match status" value="1"/>
</dbReference>
<organism>
    <name type="scientific">Leifsonia xyli subsp. xyli (strain CTCB07)</name>
    <dbReference type="NCBI Taxonomy" id="281090"/>
    <lineage>
        <taxon>Bacteria</taxon>
        <taxon>Bacillati</taxon>
        <taxon>Actinomycetota</taxon>
        <taxon>Actinomycetes</taxon>
        <taxon>Micrococcales</taxon>
        <taxon>Microbacteriaceae</taxon>
        <taxon>Leifsonia</taxon>
    </lineage>
</organism>
<feature type="chain" id="PRO_0000137782" description="Argininosuccinate lyase">
    <location>
        <begin position="1"/>
        <end position="475"/>
    </location>
</feature>
<keyword id="KW-0028">Amino-acid biosynthesis</keyword>
<keyword id="KW-0055">Arginine biosynthesis</keyword>
<keyword id="KW-0963">Cytoplasm</keyword>
<keyword id="KW-0456">Lyase</keyword>
<keyword id="KW-1185">Reference proteome</keyword>
<name>ARLY_LEIXX</name>
<accession>Q6AGC8</accession>
<evidence type="ECO:0000255" key="1">
    <source>
        <dbReference type="HAMAP-Rule" id="MF_00006"/>
    </source>
</evidence>
<protein>
    <recommendedName>
        <fullName evidence="1">Argininosuccinate lyase</fullName>
        <shortName evidence="1">ASAL</shortName>
        <ecNumber evidence="1">4.3.2.1</ecNumber>
    </recommendedName>
    <alternativeName>
        <fullName evidence="1">Arginosuccinase</fullName>
    </alternativeName>
</protein>
<sequence>MHGGVGHTDEGKLWGARFAGGPSPELAALSASTHFDWALAAYDLAGSRAHAAALAACGYLTDDELAGMLAALDRLDEDVASGAFAAAETDEDVHGALERGLIERAGADLGGKLRAGRSRNDQIATLVRLYLRDHAGVIAERLIALVDAIAAQAEAHPTTILPGRTHLQHAQPVLLAHHLLAHCWPLVRDLERLADWDKRANVSPYGGGALAGSTLGLDPLLVARELGFAASSENSIDGTAARDVVAEFVFIAAQIGVDLSRFAEEIILWNTREFGFVTLDDSYSTGSSIMPQKKNPDIAELARGKSGRLIGNLTGLLTTLKGLPLAYNRDLQEDKEPVFDSVQTLEVVLPAFAGMVATLRFHTDRMAELAPQGFSLATDVAEWLVKRHVPFRVAHELTGSLVRFAEENGLELHEVSDGQFAAISPLLTPDVRTVLTVEGSVASRAGAGGTAPERVAEQLAALTGRVRSLAARREL</sequence>
<gene>
    <name evidence="1" type="primary">argH</name>
    <name type="ordered locus">Lxx06080</name>
</gene>
<comment type="catalytic activity">
    <reaction evidence="1">
        <text>2-(N(omega)-L-arginino)succinate = fumarate + L-arginine</text>
        <dbReference type="Rhea" id="RHEA:24020"/>
        <dbReference type="ChEBI" id="CHEBI:29806"/>
        <dbReference type="ChEBI" id="CHEBI:32682"/>
        <dbReference type="ChEBI" id="CHEBI:57472"/>
        <dbReference type="EC" id="4.3.2.1"/>
    </reaction>
</comment>
<comment type="pathway">
    <text evidence="1">Amino-acid biosynthesis; L-arginine biosynthesis; L-arginine from L-ornithine and carbamoyl phosphate: step 3/3.</text>
</comment>
<comment type="subcellular location">
    <subcellularLocation>
        <location evidence="1">Cytoplasm</location>
    </subcellularLocation>
</comment>
<comment type="similarity">
    <text evidence="1">Belongs to the lyase 1 family. Argininosuccinate lyase subfamily.</text>
</comment>